<sequence>MLDLVKYPVITQKTYIALFKDRQYTFDVDLRLTKPQIKKVFETLFNVDVISVNTHIPPRQKIRVGLAQGYRPRYKRAIITLKEGQSINYSLKNDN</sequence>
<organism>
    <name type="scientific">Chlamydomonas reinhardtii</name>
    <name type="common">Chlamydomonas smithii</name>
    <dbReference type="NCBI Taxonomy" id="3055"/>
    <lineage>
        <taxon>Eukaryota</taxon>
        <taxon>Viridiplantae</taxon>
        <taxon>Chlorophyta</taxon>
        <taxon>core chlorophytes</taxon>
        <taxon>Chlorophyceae</taxon>
        <taxon>CS clade</taxon>
        <taxon>Chlamydomonadales</taxon>
        <taxon>Chlamydomonadaceae</taxon>
        <taxon>Chlamydomonas</taxon>
    </lineage>
</organism>
<protein>
    <recommendedName>
        <fullName evidence="2">Large ribosomal subunit protein uL23c</fullName>
    </recommendedName>
    <alternativeName>
        <fullName>50S ribosomal protein L23, chloroplastic</fullName>
    </alternativeName>
</protein>
<accession>Q8HTL3</accession>
<accession>B7U1F4</accession>
<name>RK23_CHLRE</name>
<feature type="chain" id="PRO_0000129446" description="Large ribosomal subunit protein uL23c">
    <location>
        <begin position="1"/>
        <end position="95"/>
    </location>
</feature>
<proteinExistence type="inferred from homology"/>
<gene>
    <name type="primary">rpl23</name>
</gene>
<reference key="1">
    <citation type="submission" date="2002-10" db="EMBL/GenBank/DDBJ databases">
        <title>Chlamydomonas reinhardtii chloroplast rpl23, rpl2 and rpl5 genes.</title>
        <authorList>
            <person name="Huang C."/>
            <person name="Liu X.Q."/>
        </authorList>
    </citation>
    <scope>NUCLEOTIDE SEQUENCE [GENOMIC DNA]</scope>
</reference>
<reference key="2">
    <citation type="journal article" date="2009" name="BMC Evol. Biol.">
        <title>Nucleotide diversity of the Chlamydomonas reinhardtii plastid genome: addressing the mutational-hazard hypothesis.</title>
        <authorList>
            <person name="Smith D.R."/>
            <person name="Lee R.W."/>
        </authorList>
    </citation>
    <scope>NUCLEOTIDE SEQUENCE [LARGE SCALE GENOMIC DNA]</scope>
    <source>
        <strain>CC-503</strain>
    </source>
</reference>
<reference key="3">
    <citation type="journal article" date="2002" name="Plant Cell">
        <title>The Chlamydomonas reinhardtii plastid chromosome: islands of genes in a sea of repeats.</title>
        <authorList>
            <person name="Maul J.E."/>
            <person name="Lilly J.W."/>
            <person name="Cui L."/>
            <person name="dePamphilis C.W."/>
            <person name="Miller W."/>
            <person name="Harris E.H."/>
            <person name="Stern D.B."/>
        </authorList>
    </citation>
    <scope>IDENTIFICATION</scope>
    <scope>COMPLETE PLASTID GENOME</scope>
</reference>
<keyword id="KW-0150">Chloroplast</keyword>
<keyword id="KW-0934">Plastid</keyword>
<keyword id="KW-1185">Reference proteome</keyword>
<keyword id="KW-0687">Ribonucleoprotein</keyword>
<keyword id="KW-0689">Ribosomal protein</keyword>
<keyword id="KW-0694">RNA-binding</keyword>
<keyword id="KW-0699">rRNA-binding</keyword>
<dbReference type="EMBL" id="AY168950">
    <property type="protein sequence ID" value="AAN60081.1"/>
    <property type="molecule type" value="Genomic_DNA"/>
</dbReference>
<dbReference type="EMBL" id="FJ423446">
    <property type="protein sequence ID" value="ACJ50101.1"/>
    <property type="molecule type" value="Genomic_DNA"/>
</dbReference>
<dbReference type="EMBL" id="BK000554">
    <property type="protein sequence ID" value="DAA00914.1"/>
    <property type="molecule type" value="Genomic_DNA"/>
</dbReference>
<dbReference type="RefSeq" id="NP_958368.1">
    <property type="nucleotide sequence ID" value="NC_005353.1"/>
</dbReference>
<dbReference type="SMR" id="Q8HTL3"/>
<dbReference type="FunCoup" id="Q8HTL3">
    <property type="interactions" value="58"/>
</dbReference>
<dbReference type="STRING" id="3055.Q8HTL3"/>
<dbReference type="PaxDb" id="3055-DAA00914"/>
<dbReference type="GeneID" id="2717054"/>
<dbReference type="KEGG" id="cre:ChreCp011"/>
<dbReference type="eggNOG" id="ENOG502SCW7">
    <property type="taxonomic scope" value="Eukaryota"/>
</dbReference>
<dbReference type="HOGENOM" id="CLU_037562_3_2_1"/>
<dbReference type="InParanoid" id="Q8HTL3"/>
<dbReference type="Proteomes" id="UP000006906">
    <property type="component" value="Chloroplast"/>
</dbReference>
<dbReference type="GO" id="GO:0009507">
    <property type="term" value="C:chloroplast"/>
    <property type="evidence" value="ECO:0007669"/>
    <property type="project" value="UniProtKB-SubCell"/>
</dbReference>
<dbReference type="GO" id="GO:0022625">
    <property type="term" value="C:cytosolic large ribosomal subunit"/>
    <property type="evidence" value="ECO:0000318"/>
    <property type="project" value="GO_Central"/>
</dbReference>
<dbReference type="GO" id="GO:0019843">
    <property type="term" value="F:rRNA binding"/>
    <property type="evidence" value="ECO:0007669"/>
    <property type="project" value="UniProtKB-UniRule"/>
</dbReference>
<dbReference type="GO" id="GO:0003735">
    <property type="term" value="F:structural constituent of ribosome"/>
    <property type="evidence" value="ECO:0000318"/>
    <property type="project" value="GO_Central"/>
</dbReference>
<dbReference type="GO" id="GO:0006412">
    <property type="term" value="P:translation"/>
    <property type="evidence" value="ECO:0007669"/>
    <property type="project" value="UniProtKB-UniRule"/>
</dbReference>
<dbReference type="FunFam" id="3.30.70.330:FF:000001">
    <property type="entry name" value="50S ribosomal protein L23"/>
    <property type="match status" value="1"/>
</dbReference>
<dbReference type="Gene3D" id="3.30.70.330">
    <property type="match status" value="1"/>
</dbReference>
<dbReference type="HAMAP" id="MF_01369_B">
    <property type="entry name" value="Ribosomal_uL23_B"/>
    <property type="match status" value="1"/>
</dbReference>
<dbReference type="InterPro" id="IPR012677">
    <property type="entry name" value="Nucleotide-bd_a/b_plait_sf"/>
</dbReference>
<dbReference type="InterPro" id="IPR013025">
    <property type="entry name" value="Ribosomal_uL23-like"/>
</dbReference>
<dbReference type="InterPro" id="IPR012678">
    <property type="entry name" value="Ribosomal_uL23/eL15/eS24_sf"/>
</dbReference>
<dbReference type="PANTHER" id="PTHR11620">
    <property type="entry name" value="60S RIBOSOMAL PROTEIN L23A"/>
    <property type="match status" value="1"/>
</dbReference>
<dbReference type="Pfam" id="PF00276">
    <property type="entry name" value="Ribosomal_L23"/>
    <property type="match status" value="1"/>
</dbReference>
<dbReference type="SUPFAM" id="SSF54189">
    <property type="entry name" value="Ribosomal proteins S24e, L23 and L15e"/>
    <property type="match status" value="1"/>
</dbReference>
<evidence type="ECO:0000250" key="1"/>
<evidence type="ECO:0000305" key="2"/>
<comment type="function">
    <text evidence="1">Binds to 23S rRNA.</text>
</comment>
<comment type="subunit">
    <text evidence="1">Part of the 50S ribosomal subunit.</text>
</comment>
<comment type="subcellular location">
    <subcellularLocation>
        <location>Plastid</location>
        <location>Chloroplast</location>
    </subcellularLocation>
</comment>
<comment type="similarity">
    <text evidence="2">Belongs to the universal ribosomal protein uL23 family.</text>
</comment>
<geneLocation type="chloroplast"/>